<accession>Q71YY6</accession>
<protein>
    <recommendedName>
        <fullName evidence="1">5-methyltetrahydropteroyltriglutamate--homocysteine methyltransferase</fullName>
        <ecNumber evidence="1">2.1.1.14</ecNumber>
    </recommendedName>
    <alternativeName>
        <fullName evidence="1">Cobalamin-independent methionine synthase</fullName>
    </alternativeName>
    <alternativeName>
        <fullName evidence="1">Methionine synthase, vitamin-B12 independent isozyme</fullName>
    </alternativeName>
</protein>
<sequence length="765" mass="86329">MVKAISSNLGYPRLGEKREWKRALEKFWNGTISEKELLAETKILRLHALKKQQDKGIDLIPVGDFSFYDQVLDTSVTFGIIPKRFQHDGGKVSLNTYFDIARGKNDAVASEMTKWFNTNYHYIVPELADAEPKVLDNRALYYYEEAKKELGIEGKPVLVGPITYLKLGKGSDAKSFEVLLDKFIPAYVEILKELEAAGAKWVQIDEPYLATSFDKKEIALFEKVYQAFQTAVPNLKIELQTYFESLDYYEEVVNLPVAAIGIDFVHDHGDSIKALKAHGFPEDKYLAAGVVDGRNVWRSDLDAKLELLTEIANYVADGKLIVQPSNSLLHVPVTKLSEPDLDEVILGGLSFADQKLEEITILTKALTNGAESVAAELEESRAAVTALNESSHRNNLEVQEAIANLKNVRVDRELPFAERIKLQHAWLKLPLFPTTTIGSFPQSPEVRKTRADWLKGNITDAEYNAFIEKETARWIKIQEDLDIDVLVHGEFERTDMVEYFGQKLAGFQATKFGWVQSYGSRAVRPPLIYGDVAFTEEITVKESVYAQSLTKRPVKGMLTAPVTIINWSFVRDDVPESVVANQVGLALRKEVEALERNGIKVIQVDEPALREGLPLKQARWQKYLDDAVYSFKLTTASVQNDTQIHTHMCYSDFDDIIDTISALDADVISIETSRSHGEIISTFEEVTYDKEIGLGVYDIHSPRVPTVTEIQDNIRRALRAIDAKQFWINPDCGLKTRKEPETIAALQDMIKATKEVRAEYQVLEK</sequence>
<proteinExistence type="inferred from homology"/>
<organism>
    <name type="scientific">Listeria monocytogenes serotype 4b (strain F2365)</name>
    <dbReference type="NCBI Taxonomy" id="265669"/>
    <lineage>
        <taxon>Bacteria</taxon>
        <taxon>Bacillati</taxon>
        <taxon>Bacillota</taxon>
        <taxon>Bacilli</taxon>
        <taxon>Bacillales</taxon>
        <taxon>Listeriaceae</taxon>
        <taxon>Listeria</taxon>
    </lineage>
</organism>
<name>METE_LISMF</name>
<gene>
    <name evidence="1" type="primary">metE</name>
    <name type="ordered locus">LMOf2365_1705</name>
</gene>
<keyword id="KW-0028">Amino-acid biosynthesis</keyword>
<keyword id="KW-0479">Metal-binding</keyword>
<keyword id="KW-0486">Methionine biosynthesis</keyword>
<keyword id="KW-0489">Methyltransferase</keyword>
<keyword id="KW-0677">Repeat</keyword>
<keyword id="KW-0808">Transferase</keyword>
<keyword id="KW-0862">Zinc</keyword>
<evidence type="ECO:0000255" key="1">
    <source>
        <dbReference type="HAMAP-Rule" id="MF_00172"/>
    </source>
</evidence>
<reference key="1">
    <citation type="journal article" date="2004" name="Nucleic Acids Res.">
        <title>Whole genome comparisons of serotype 4b and 1/2a strains of the food-borne pathogen Listeria monocytogenes reveal new insights into the core genome components of this species.</title>
        <authorList>
            <person name="Nelson K.E."/>
            <person name="Fouts D.E."/>
            <person name="Mongodin E.F."/>
            <person name="Ravel J."/>
            <person name="DeBoy R.T."/>
            <person name="Kolonay J.F."/>
            <person name="Rasko D.A."/>
            <person name="Angiuoli S.V."/>
            <person name="Gill S.R."/>
            <person name="Paulsen I.T."/>
            <person name="Peterson J.D."/>
            <person name="White O."/>
            <person name="Nelson W.C."/>
            <person name="Nierman W.C."/>
            <person name="Beanan M.J."/>
            <person name="Brinkac L.M."/>
            <person name="Daugherty S.C."/>
            <person name="Dodson R.J."/>
            <person name="Durkin A.S."/>
            <person name="Madupu R."/>
            <person name="Haft D.H."/>
            <person name="Selengut J."/>
            <person name="Van Aken S.E."/>
            <person name="Khouri H.M."/>
            <person name="Fedorova N."/>
            <person name="Forberger H.A."/>
            <person name="Tran B."/>
            <person name="Kathariou S."/>
            <person name="Wonderling L.D."/>
            <person name="Uhlich G.A."/>
            <person name="Bayles D.O."/>
            <person name="Luchansky J.B."/>
            <person name="Fraser C.M."/>
        </authorList>
    </citation>
    <scope>NUCLEOTIDE SEQUENCE [LARGE SCALE GENOMIC DNA]</scope>
    <source>
        <strain>F2365</strain>
    </source>
</reference>
<dbReference type="EC" id="2.1.1.14" evidence="1"/>
<dbReference type="EMBL" id="AE017262">
    <property type="protein sequence ID" value="AAT04478.1"/>
    <property type="molecule type" value="Genomic_DNA"/>
</dbReference>
<dbReference type="RefSeq" id="WP_003726096.1">
    <property type="nucleotide sequence ID" value="NC_002973.6"/>
</dbReference>
<dbReference type="SMR" id="Q71YY6"/>
<dbReference type="KEGG" id="lmf:LMOf2365_1705"/>
<dbReference type="HOGENOM" id="CLU_013175_0_0_9"/>
<dbReference type="UniPathway" id="UPA00051">
    <property type="reaction ID" value="UER00082"/>
</dbReference>
<dbReference type="GO" id="GO:0003871">
    <property type="term" value="F:5-methyltetrahydropteroyltriglutamate-homocysteine S-methyltransferase activity"/>
    <property type="evidence" value="ECO:0007669"/>
    <property type="project" value="UniProtKB-UniRule"/>
</dbReference>
<dbReference type="GO" id="GO:0008270">
    <property type="term" value="F:zinc ion binding"/>
    <property type="evidence" value="ECO:0007669"/>
    <property type="project" value="InterPro"/>
</dbReference>
<dbReference type="GO" id="GO:0009086">
    <property type="term" value="P:methionine biosynthetic process"/>
    <property type="evidence" value="ECO:0007669"/>
    <property type="project" value="UniProtKB-UniRule"/>
</dbReference>
<dbReference type="GO" id="GO:0032259">
    <property type="term" value="P:methylation"/>
    <property type="evidence" value="ECO:0007669"/>
    <property type="project" value="UniProtKB-KW"/>
</dbReference>
<dbReference type="CDD" id="cd03311">
    <property type="entry name" value="CIMS_C_terminal_like"/>
    <property type="match status" value="1"/>
</dbReference>
<dbReference type="CDD" id="cd03312">
    <property type="entry name" value="CIMS_N_terminal_like"/>
    <property type="match status" value="1"/>
</dbReference>
<dbReference type="Gene3D" id="3.20.20.210">
    <property type="match status" value="2"/>
</dbReference>
<dbReference type="HAMAP" id="MF_00172">
    <property type="entry name" value="Meth_synth"/>
    <property type="match status" value="1"/>
</dbReference>
<dbReference type="InterPro" id="IPR013215">
    <property type="entry name" value="Cbl-indep_Met_Synth_N"/>
</dbReference>
<dbReference type="InterPro" id="IPR006276">
    <property type="entry name" value="Cobalamin-indep_Met_synthase"/>
</dbReference>
<dbReference type="InterPro" id="IPR002629">
    <property type="entry name" value="Met_Synth_C/arc"/>
</dbReference>
<dbReference type="InterPro" id="IPR038071">
    <property type="entry name" value="UROD/MetE-like_sf"/>
</dbReference>
<dbReference type="NCBIfam" id="TIGR01371">
    <property type="entry name" value="met_syn_B12ind"/>
    <property type="match status" value="1"/>
</dbReference>
<dbReference type="NCBIfam" id="NF003556">
    <property type="entry name" value="PRK05222.1"/>
    <property type="match status" value="1"/>
</dbReference>
<dbReference type="PANTHER" id="PTHR30519">
    <property type="entry name" value="5-METHYLTETRAHYDROPTEROYLTRIGLUTAMATE--HOMOCYSTEINE METHYLTRANSFERASE"/>
    <property type="match status" value="1"/>
</dbReference>
<dbReference type="Pfam" id="PF08267">
    <property type="entry name" value="Meth_synt_1"/>
    <property type="match status" value="1"/>
</dbReference>
<dbReference type="Pfam" id="PF01717">
    <property type="entry name" value="Meth_synt_2"/>
    <property type="match status" value="1"/>
</dbReference>
<dbReference type="PIRSF" id="PIRSF000382">
    <property type="entry name" value="MeTrfase_B12_ind"/>
    <property type="match status" value="1"/>
</dbReference>
<dbReference type="SUPFAM" id="SSF51726">
    <property type="entry name" value="UROD/MetE-like"/>
    <property type="match status" value="2"/>
</dbReference>
<feature type="chain" id="PRO_0000098637" description="5-methyltetrahydropteroyltriglutamate--homocysteine methyltransferase">
    <location>
        <begin position="1"/>
        <end position="765"/>
    </location>
</feature>
<feature type="active site" description="Proton donor" evidence="1">
    <location>
        <position position="700"/>
    </location>
</feature>
<feature type="binding site" evidence="1">
    <location>
        <begin position="18"/>
        <end position="21"/>
    </location>
    <ligand>
        <name>5-methyltetrahydropteroyltri-L-glutamate</name>
        <dbReference type="ChEBI" id="CHEBI:58207"/>
    </ligand>
</feature>
<feature type="binding site" evidence="1">
    <location>
        <position position="114"/>
    </location>
    <ligand>
        <name>5-methyltetrahydropteroyltri-L-glutamate</name>
        <dbReference type="ChEBI" id="CHEBI:58207"/>
    </ligand>
</feature>
<feature type="binding site" evidence="1">
    <location>
        <begin position="437"/>
        <end position="439"/>
    </location>
    <ligand>
        <name>L-homocysteine</name>
        <dbReference type="ChEBI" id="CHEBI:58199"/>
    </ligand>
</feature>
<feature type="binding site" evidence="1">
    <location>
        <begin position="437"/>
        <end position="439"/>
    </location>
    <ligand>
        <name>L-methionine</name>
        <dbReference type="ChEBI" id="CHEBI:57844"/>
    </ligand>
</feature>
<feature type="binding site" evidence="1">
    <location>
        <position position="490"/>
    </location>
    <ligand>
        <name>L-homocysteine</name>
        <dbReference type="ChEBI" id="CHEBI:58199"/>
    </ligand>
</feature>
<feature type="binding site" evidence="1">
    <location>
        <position position="490"/>
    </location>
    <ligand>
        <name>L-methionine</name>
        <dbReference type="ChEBI" id="CHEBI:57844"/>
    </ligand>
</feature>
<feature type="binding site" evidence="1">
    <location>
        <position position="567"/>
    </location>
    <ligand>
        <name>5-methyltetrahydropteroyltri-L-glutamate</name>
        <dbReference type="ChEBI" id="CHEBI:58207"/>
    </ligand>
</feature>
<feature type="binding site" evidence="1">
    <location>
        <position position="605"/>
    </location>
    <ligand>
        <name>L-homocysteine</name>
        <dbReference type="ChEBI" id="CHEBI:58199"/>
    </ligand>
</feature>
<feature type="binding site" evidence="1">
    <location>
        <position position="605"/>
    </location>
    <ligand>
        <name>L-methionine</name>
        <dbReference type="ChEBI" id="CHEBI:57844"/>
    </ligand>
</feature>
<feature type="binding site" evidence="1">
    <location>
        <position position="611"/>
    </location>
    <ligand>
        <name>5-methyltetrahydropteroyltri-L-glutamate</name>
        <dbReference type="ChEBI" id="CHEBI:58207"/>
    </ligand>
</feature>
<feature type="binding site" evidence="1">
    <location>
        <position position="647"/>
    </location>
    <ligand>
        <name>Zn(2+)</name>
        <dbReference type="ChEBI" id="CHEBI:29105"/>
        <note>catalytic</note>
    </ligand>
</feature>
<feature type="binding site" evidence="1">
    <location>
        <position position="649"/>
    </location>
    <ligand>
        <name>Zn(2+)</name>
        <dbReference type="ChEBI" id="CHEBI:29105"/>
        <note>catalytic</note>
    </ligand>
</feature>
<feature type="binding site" evidence="1">
    <location>
        <position position="671"/>
    </location>
    <ligand>
        <name>Zn(2+)</name>
        <dbReference type="ChEBI" id="CHEBI:29105"/>
        <note>catalytic</note>
    </ligand>
</feature>
<feature type="binding site" evidence="1">
    <location>
        <position position="732"/>
    </location>
    <ligand>
        <name>Zn(2+)</name>
        <dbReference type="ChEBI" id="CHEBI:29105"/>
        <note>catalytic</note>
    </ligand>
</feature>
<comment type="function">
    <text evidence="1">Catalyzes the transfer of a methyl group from 5-methyltetrahydrofolate to homocysteine resulting in methionine formation.</text>
</comment>
<comment type="catalytic activity">
    <reaction evidence="1">
        <text>5-methyltetrahydropteroyltri-L-glutamate + L-homocysteine = tetrahydropteroyltri-L-glutamate + L-methionine</text>
        <dbReference type="Rhea" id="RHEA:21196"/>
        <dbReference type="ChEBI" id="CHEBI:57844"/>
        <dbReference type="ChEBI" id="CHEBI:58140"/>
        <dbReference type="ChEBI" id="CHEBI:58199"/>
        <dbReference type="ChEBI" id="CHEBI:58207"/>
        <dbReference type="EC" id="2.1.1.14"/>
    </reaction>
</comment>
<comment type="cofactor">
    <cofactor evidence="1">
        <name>Zn(2+)</name>
        <dbReference type="ChEBI" id="CHEBI:29105"/>
    </cofactor>
    <text evidence="1">Binds 1 zinc ion per subunit.</text>
</comment>
<comment type="pathway">
    <text evidence="1">Amino-acid biosynthesis; L-methionine biosynthesis via de novo pathway; L-methionine from L-homocysteine (MetE route): step 1/1.</text>
</comment>
<comment type="similarity">
    <text evidence="1">Belongs to the vitamin-B12 independent methionine synthase family.</text>
</comment>